<reference key="1">
    <citation type="journal article" date="1997" name="Genes Dev.">
        <title>Fission yeast WD-repeat protein pop1 regulates genome ploidy through ubiquitin-proteasome-mediated degradation of the CDK inhibitor Rum1 and the S-phase initiator Cdc18.</title>
        <authorList>
            <person name="Kominami K."/>
            <person name="Toda T."/>
        </authorList>
    </citation>
    <scope>NUCLEOTIDE SEQUENCE [GENOMIC DNA]</scope>
    <scope>FUNCTION</scope>
    <scope>INTERACTION WITH CDC18</scope>
    <source>
        <strain>972 / ATCC 24843</strain>
    </source>
</reference>
<reference key="2">
    <citation type="journal article" date="2002" name="Nature">
        <title>The genome sequence of Schizosaccharomyces pombe.</title>
        <authorList>
            <person name="Wood V."/>
            <person name="Gwilliam R."/>
            <person name="Rajandream M.A."/>
            <person name="Lyne M.H."/>
            <person name="Lyne R."/>
            <person name="Stewart A."/>
            <person name="Sgouros J.G."/>
            <person name="Peat N."/>
            <person name="Hayles J."/>
            <person name="Baker S.G."/>
            <person name="Basham D."/>
            <person name="Bowman S."/>
            <person name="Brooks K."/>
            <person name="Brown D."/>
            <person name="Brown S."/>
            <person name="Chillingworth T."/>
            <person name="Churcher C.M."/>
            <person name="Collins M."/>
            <person name="Connor R."/>
            <person name="Cronin A."/>
            <person name="Davis P."/>
            <person name="Feltwell T."/>
            <person name="Fraser A."/>
            <person name="Gentles S."/>
            <person name="Goble A."/>
            <person name="Hamlin N."/>
            <person name="Harris D.E."/>
            <person name="Hidalgo J."/>
            <person name="Hodgson G."/>
            <person name="Holroyd S."/>
            <person name="Hornsby T."/>
            <person name="Howarth S."/>
            <person name="Huckle E.J."/>
            <person name="Hunt S."/>
            <person name="Jagels K."/>
            <person name="James K.D."/>
            <person name="Jones L."/>
            <person name="Jones M."/>
            <person name="Leather S."/>
            <person name="McDonald S."/>
            <person name="McLean J."/>
            <person name="Mooney P."/>
            <person name="Moule S."/>
            <person name="Mungall K.L."/>
            <person name="Murphy L.D."/>
            <person name="Niblett D."/>
            <person name="Odell C."/>
            <person name="Oliver K."/>
            <person name="O'Neil S."/>
            <person name="Pearson D."/>
            <person name="Quail M.A."/>
            <person name="Rabbinowitsch E."/>
            <person name="Rutherford K.M."/>
            <person name="Rutter S."/>
            <person name="Saunders D."/>
            <person name="Seeger K."/>
            <person name="Sharp S."/>
            <person name="Skelton J."/>
            <person name="Simmonds M.N."/>
            <person name="Squares R."/>
            <person name="Squares S."/>
            <person name="Stevens K."/>
            <person name="Taylor K."/>
            <person name="Taylor R.G."/>
            <person name="Tivey A."/>
            <person name="Walsh S.V."/>
            <person name="Warren T."/>
            <person name="Whitehead S."/>
            <person name="Woodward J.R."/>
            <person name="Volckaert G."/>
            <person name="Aert R."/>
            <person name="Robben J."/>
            <person name="Grymonprez B."/>
            <person name="Weltjens I."/>
            <person name="Vanstreels E."/>
            <person name="Rieger M."/>
            <person name="Schaefer M."/>
            <person name="Mueller-Auer S."/>
            <person name="Gabel C."/>
            <person name="Fuchs M."/>
            <person name="Duesterhoeft A."/>
            <person name="Fritzc C."/>
            <person name="Holzer E."/>
            <person name="Moestl D."/>
            <person name="Hilbert H."/>
            <person name="Borzym K."/>
            <person name="Langer I."/>
            <person name="Beck A."/>
            <person name="Lehrach H."/>
            <person name="Reinhardt R."/>
            <person name="Pohl T.M."/>
            <person name="Eger P."/>
            <person name="Zimmermann W."/>
            <person name="Wedler H."/>
            <person name="Wambutt R."/>
            <person name="Purnelle B."/>
            <person name="Goffeau A."/>
            <person name="Cadieu E."/>
            <person name="Dreano S."/>
            <person name="Gloux S."/>
            <person name="Lelaure V."/>
            <person name="Mottier S."/>
            <person name="Galibert F."/>
            <person name="Aves S.J."/>
            <person name="Xiang Z."/>
            <person name="Hunt C."/>
            <person name="Moore K."/>
            <person name="Hurst S.M."/>
            <person name="Lucas M."/>
            <person name="Rochet M."/>
            <person name="Gaillardin C."/>
            <person name="Tallada V.A."/>
            <person name="Garzon A."/>
            <person name="Thode G."/>
            <person name="Daga R.R."/>
            <person name="Cruzado L."/>
            <person name="Jimenez J."/>
            <person name="Sanchez M."/>
            <person name="del Rey F."/>
            <person name="Benito J."/>
            <person name="Dominguez A."/>
            <person name="Revuelta J.L."/>
            <person name="Moreno S."/>
            <person name="Armstrong J."/>
            <person name="Forsburg S.L."/>
            <person name="Cerutti L."/>
            <person name="Lowe T."/>
            <person name="McCombie W.R."/>
            <person name="Paulsen I."/>
            <person name="Potashkin J."/>
            <person name="Shpakovski G.V."/>
            <person name="Ussery D."/>
            <person name="Barrell B.G."/>
            <person name="Nurse P."/>
        </authorList>
    </citation>
    <scope>NUCLEOTIDE SEQUENCE [LARGE SCALE GENOMIC DNA]</scope>
    <source>
        <strain>972 / ATCC 24843</strain>
    </source>
</reference>
<reference key="3">
    <citation type="journal article" date="1998" name="Genes Cells">
        <title>Two F-box/WD-repeat proteins Pop1 and Pop2 form hetero- and homo-complexes together with cullin-1 in fission yeast SCF (Skip-cullin-1-F-box) ubiquitin ligase.</title>
        <authorList>
            <person name="Kominami K."/>
            <person name="Ochotorena I."/>
            <person name="Toda T."/>
        </authorList>
    </citation>
    <scope>SUBUNIT</scope>
    <source>
        <strain>972 / ATCC 24843</strain>
    </source>
</reference>
<reference key="4">
    <citation type="journal article" date="1998" name="Curr. Genet.">
        <title>The Ste16 WD-repeat protein regulates cell-cycle progression under starvation through the Rum1 protein in Schizosaccharomyces pombe.</title>
        <authorList>
            <person name="Maekawa H."/>
            <person name="Kitamura K."/>
            <person name="Shimoda C."/>
        </authorList>
    </citation>
    <scope>FUNCTION</scope>
</reference>
<reference key="5">
    <citation type="journal article" date="1999" name="Curr. Biol.">
        <title>F-box/WD-repeat proteins pop1p and Sud1p/Pop2p form complexes that bind and direct the proteolysis of cdc18p.</title>
        <authorList>
            <person name="Wolf D.A."/>
            <person name="McKeon F."/>
            <person name="Jackson P.K."/>
        </authorList>
    </citation>
    <scope>INTERACTION WITH POP2 AND CDC18</scope>
</reference>
<reference key="6">
    <citation type="journal article" date="2002" name="BMC Biochem.">
        <title>Combinatorial diversity of fission yeast SCF ubiquitin ligases by homo- and heterooligomeric assemblies of the F-box proteins Pop1p and Pop2p.</title>
        <authorList>
            <person name="Seibert V."/>
            <person name="Prohl C."/>
            <person name="Schoultz I."/>
            <person name="Rhee E."/>
            <person name="Lopez R."/>
            <person name="Abderazzaq K."/>
            <person name="Zhou C."/>
            <person name="Wolf D.A."/>
        </authorList>
    </citation>
    <scope>FUNCTION</scope>
    <scope>SUBUNIT</scope>
    <scope>SUBCELLULAR LOCATION</scope>
</reference>
<reference key="7">
    <citation type="journal article" date="2004" name="Genes Cells">
        <title>Molecular interactions of fission yeast Skp1 and its role in the DNA damage checkpoint.</title>
        <authorList>
            <person name="Lehmann A."/>
            <person name="Katayama S."/>
            <person name="Harrison C."/>
            <person name="Dhut S."/>
            <person name="Kitamura K."/>
            <person name="McDonald N."/>
            <person name="Toda T."/>
        </authorList>
    </citation>
    <scope>INTERACTION WITH SKP1</scope>
</reference>
<reference key="8">
    <citation type="journal article" date="2004" name="J. Biol. Chem.">
        <title>Requirement of the SCFPop1/Pop2 ubiquitin ligase for degradation of the fission yeast S phase cyclin Cig2.</title>
        <authorList>
            <person name="Yamano H."/>
            <person name="Kominami K."/>
            <person name="Harrison C."/>
            <person name="Kitamura K."/>
            <person name="Katayama S."/>
            <person name="Dhut S."/>
            <person name="Hunt T."/>
            <person name="Toda T."/>
        </authorList>
    </citation>
    <scope>FUNCTION</scope>
    <scope>INTERACTION WITH CIG2</scope>
</reference>
<reference key="9">
    <citation type="journal article" date="2006" name="Nat. Biotechnol.">
        <title>ORFeome cloning and global analysis of protein localization in the fission yeast Schizosaccharomyces pombe.</title>
        <authorList>
            <person name="Matsuyama A."/>
            <person name="Arai R."/>
            <person name="Yashiroda Y."/>
            <person name="Shirai A."/>
            <person name="Kamata A."/>
            <person name="Sekido S."/>
            <person name="Kobayashi Y."/>
            <person name="Hashimoto A."/>
            <person name="Hamamoto M."/>
            <person name="Hiraoka Y."/>
            <person name="Horinouchi S."/>
            <person name="Yoshida M."/>
        </authorList>
    </citation>
    <scope>SUBCELLULAR LOCATION [LARGE SCALE ANALYSIS]</scope>
</reference>
<gene>
    <name type="primary">pop1</name>
    <name type="synonym">ste16</name>
    <name type="ORF">SPBC1718.01</name>
    <name type="ORF">SPBC2G2.18</name>
</gene>
<evidence type="ECO:0000255" key="1">
    <source>
        <dbReference type="PROSITE-ProRule" id="PRU00080"/>
    </source>
</evidence>
<evidence type="ECO:0000269" key="2">
    <source>
    </source>
</evidence>
<evidence type="ECO:0000269" key="3">
    <source>
    </source>
</evidence>
<evidence type="ECO:0000269" key="4">
    <source>
    </source>
</evidence>
<evidence type="ECO:0000269" key="5">
    <source>
    </source>
</evidence>
<evidence type="ECO:0000269" key="6">
    <source>
    </source>
</evidence>
<evidence type="ECO:0000269" key="7">
    <source>
    </source>
</evidence>
<name>POP1_SCHPO</name>
<keyword id="KW-0539">Nucleus</keyword>
<keyword id="KW-1185">Reference proteome</keyword>
<keyword id="KW-0677">Repeat</keyword>
<keyword id="KW-0833">Ubl conjugation pathway</keyword>
<keyword id="KW-0853">WD repeat</keyword>
<comment type="function">
    <text evidence="2 3 5 6">Involved in maintenance of ploidy through proteasome dependent degradation of CDK inhibitor rum1 and S-phase initiator cdc18. Functions as a recognition factor for rum1 and cdc18, which are subsequently ubiquitinated and targeted to the 26S proteasome for degradation. Together with pop2, required for cig2 instability during G2 and M phase and cig2 degradation in exponentially growing cells. Regulates cell-cycle progression under starvation through the rum1 protein.</text>
</comment>
<comment type="subunit">
    <text evidence="2 7">Homodimer and heterodimer with pop2. Binds to cdc18, phosphorylated cig2, cul1, pip1 and skp1.</text>
</comment>
<comment type="interaction">
    <interactant intactId="EBI-1185389">
        <id>P87060</id>
    </interactant>
    <interactant intactId="EBI-1207853">
        <id>P41411</id>
        <label>cdc18</label>
    </interactant>
    <organismsDiffer>false</organismsDiffer>
    <experiments>3</experiments>
</comment>
<comment type="interaction">
    <interactant intactId="EBI-1185389">
        <id>P87060</id>
    </interactant>
    <interactant intactId="EBI-1149212">
        <id>P36630</id>
        <label>cig2</label>
    </interactant>
    <organismsDiffer>false</organismsDiffer>
    <experiments>4</experiments>
</comment>
<comment type="interaction">
    <interactant intactId="EBI-1185389">
        <id>P87060</id>
    </interactant>
    <interactant intactId="EBI-1185414">
        <id>O14170</id>
        <label>pop2</label>
    </interactant>
    <organismsDiffer>false</organismsDiffer>
    <experiments>12</experiments>
</comment>
<comment type="interaction">
    <interactant intactId="EBI-1185389">
        <id>P87060</id>
    </interactant>
    <interactant intactId="EBI-1172248">
        <id>Q9Y709</id>
        <label>skp1</label>
    </interactant>
    <organismsDiffer>false</organismsDiffer>
    <experiments>2</experiments>
</comment>
<comment type="subcellular location">
    <subcellularLocation>
        <location evidence="2 4">Nucleus</location>
    </subcellularLocation>
</comment>
<accession>P87060</accession>
<accession>Q9P7P3</accession>
<proteinExistence type="evidence at protein level"/>
<dbReference type="EMBL" id="Y08391">
    <property type="protein sequence ID" value="CAA69671.1"/>
    <property type="molecule type" value="Genomic_DNA"/>
</dbReference>
<dbReference type="EMBL" id="CU329671">
    <property type="protein sequence ID" value="CAB75991.2"/>
    <property type="molecule type" value="Genomic_DNA"/>
</dbReference>
<dbReference type="PIR" id="T45136">
    <property type="entry name" value="T45136"/>
</dbReference>
<dbReference type="PIR" id="T50329">
    <property type="entry name" value="T50329"/>
</dbReference>
<dbReference type="RefSeq" id="XP_001713146.1">
    <property type="nucleotide sequence ID" value="XM_001713094.2"/>
</dbReference>
<dbReference type="SMR" id="P87060"/>
<dbReference type="BioGRID" id="277039">
    <property type="interactions" value="13"/>
</dbReference>
<dbReference type="FunCoup" id="P87060">
    <property type="interactions" value="142"/>
</dbReference>
<dbReference type="IntAct" id="P87060">
    <property type="interactions" value="7"/>
</dbReference>
<dbReference type="STRING" id="284812.P87060"/>
<dbReference type="iPTMnet" id="P87060"/>
<dbReference type="PaxDb" id="4896-SPBC1718.01.1"/>
<dbReference type="EnsemblFungi" id="SPBC1718.01.1">
    <property type="protein sequence ID" value="SPBC1718.01.1:pep"/>
    <property type="gene ID" value="SPBC1718.01"/>
</dbReference>
<dbReference type="PomBase" id="SPBC1718.01">
    <property type="gene designation" value="pop1"/>
</dbReference>
<dbReference type="VEuPathDB" id="FungiDB:SPBC1718.01"/>
<dbReference type="eggNOG" id="KOG0274">
    <property type="taxonomic scope" value="Eukaryota"/>
</dbReference>
<dbReference type="HOGENOM" id="CLU_000288_103_3_1"/>
<dbReference type="InParanoid" id="P87060"/>
<dbReference type="OMA" id="WDIAKMK"/>
<dbReference type="PhylomeDB" id="P87060"/>
<dbReference type="PRO" id="PR:P87060"/>
<dbReference type="Proteomes" id="UP000002485">
    <property type="component" value="Chromosome II"/>
</dbReference>
<dbReference type="GO" id="GO:0005881">
    <property type="term" value="C:cytoplasmic microtubule"/>
    <property type="evidence" value="ECO:0000318"/>
    <property type="project" value="GO_Central"/>
</dbReference>
<dbReference type="GO" id="GO:0000776">
    <property type="term" value="C:kinetochore"/>
    <property type="evidence" value="ECO:0000318"/>
    <property type="project" value="GO_Central"/>
</dbReference>
<dbReference type="GO" id="GO:0005875">
    <property type="term" value="C:microtubule associated complex"/>
    <property type="evidence" value="ECO:0000318"/>
    <property type="project" value="GO_Central"/>
</dbReference>
<dbReference type="GO" id="GO:0005635">
    <property type="term" value="C:nuclear envelope"/>
    <property type="evidence" value="ECO:0000318"/>
    <property type="project" value="GO_Central"/>
</dbReference>
<dbReference type="GO" id="GO:0043224">
    <property type="term" value="C:nuclear SCF ubiquitin ligase complex"/>
    <property type="evidence" value="ECO:0000266"/>
    <property type="project" value="PomBase"/>
</dbReference>
<dbReference type="GO" id="GO:0005634">
    <property type="term" value="C:nucleus"/>
    <property type="evidence" value="ECO:0007005"/>
    <property type="project" value="PomBase"/>
</dbReference>
<dbReference type="GO" id="GO:0070840">
    <property type="term" value="F:dynein complex binding"/>
    <property type="evidence" value="ECO:0000318"/>
    <property type="project" value="GO_Central"/>
</dbReference>
<dbReference type="GO" id="GO:0051010">
    <property type="term" value="F:microtubule plus-end binding"/>
    <property type="evidence" value="ECO:0000318"/>
    <property type="project" value="GO_Central"/>
</dbReference>
<dbReference type="GO" id="GO:1990756">
    <property type="term" value="F:ubiquitin-like ligase-substrate adaptor activity"/>
    <property type="evidence" value="ECO:0000353"/>
    <property type="project" value="PomBase"/>
</dbReference>
<dbReference type="GO" id="GO:0031145">
    <property type="term" value="P:anaphase-promoting complex-dependent catabolic process"/>
    <property type="evidence" value="ECO:0000315"/>
    <property type="project" value="PomBase"/>
</dbReference>
<dbReference type="GO" id="GO:0000747">
    <property type="term" value="P:conjugation with cellular fusion"/>
    <property type="evidence" value="ECO:0000315"/>
    <property type="project" value="PomBase"/>
</dbReference>
<dbReference type="GO" id="GO:0000132">
    <property type="term" value="P:establishment of mitotic spindle orientation"/>
    <property type="evidence" value="ECO:0000318"/>
    <property type="project" value="GO_Central"/>
</dbReference>
<dbReference type="GO" id="GO:0031023">
    <property type="term" value="P:microtubule organizing center organization"/>
    <property type="evidence" value="ECO:0000318"/>
    <property type="project" value="GO_Central"/>
</dbReference>
<dbReference type="GO" id="GO:0007097">
    <property type="term" value="P:nuclear migration"/>
    <property type="evidence" value="ECO:0000318"/>
    <property type="project" value="GO_Central"/>
</dbReference>
<dbReference type="GO" id="GO:0031146">
    <property type="term" value="P:SCF-dependent proteasomal ubiquitin-dependent protein catabolic process"/>
    <property type="evidence" value="ECO:0000266"/>
    <property type="project" value="PomBase"/>
</dbReference>
<dbReference type="GO" id="GO:0006511">
    <property type="term" value="P:ubiquitin-dependent protein catabolic process"/>
    <property type="evidence" value="ECO:0000315"/>
    <property type="project" value="PomBase"/>
</dbReference>
<dbReference type="GO" id="GO:0047496">
    <property type="term" value="P:vesicle transport along microtubule"/>
    <property type="evidence" value="ECO:0000318"/>
    <property type="project" value="GO_Central"/>
</dbReference>
<dbReference type="CDD" id="cd00200">
    <property type="entry name" value="WD40"/>
    <property type="match status" value="1"/>
</dbReference>
<dbReference type="FunFam" id="2.130.10.10:FF:001079">
    <property type="entry name" value="Cell division control protein 4"/>
    <property type="match status" value="1"/>
</dbReference>
<dbReference type="FunFam" id="1.20.1280.50:FF:000116">
    <property type="entry name" value="SCF ubiquitin ligase complex subunit"/>
    <property type="match status" value="1"/>
</dbReference>
<dbReference type="Gene3D" id="1.20.1280.50">
    <property type="match status" value="1"/>
</dbReference>
<dbReference type="Gene3D" id="2.130.10.10">
    <property type="entry name" value="YVTN repeat-like/Quinoprotein amine dehydrogenase"/>
    <property type="match status" value="1"/>
</dbReference>
<dbReference type="InterPro" id="IPR036047">
    <property type="entry name" value="F-box-like_dom_sf"/>
</dbReference>
<dbReference type="InterPro" id="IPR001810">
    <property type="entry name" value="F-box_dom"/>
</dbReference>
<dbReference type="InterPro" id="IPR020472">
    <property type="entry name" value="G-protein_beta_WD-40_rep"/>
</dbReference>
<dbReference type="InterPro" id="IPR015943">
    <property type="entry name" value="WD40/YVTN_repeat-like_dom_sf"/>
</dbReference>
<dbReference type="InterPro" id="IPR019775">
    <property type="entry name" value="WD40_repeat_CS"/>
</dbReference>
<dbReference type="InterPro" id="IPR036322">
    <property type="entry name" value="WD40_repeat_dom_sf"/>
</dbReference>
<dbReference type="InterPro" id="IPR001680">
    <property type="entry name" value="WD40_rpt"/>
</dbReference>
<dbReference type="PANTHER" id="PTHR19848:SF8">
    <property type="entry name" value="F-BOX AND WD REPEAT DOMAIN CONTAINING 7"/>
    <property type="match status" value="1"/>
</dbReference>
<dbReference type="PANTHER" id="PTHR19848">
    <property type="entry name" value="WD40 REPEAT PROTEIN"/>
    <property type="match status" value="1"/>
</dbReference>
<dbReference type="Pfam" id="PF12937">
    <property type="entry name" value="F-box-like"/>
    <property type="match status" value="1"/>
</dbReference>
<dbReference type="Pfam" id="PF00400">
    <property type="entry name" value="WD40"/>
    <property type="match status" value="5"/>
</dbReference>
<dbReference type="PRINTS" id="PR00320">
    <property type="entry name" value="GPROTEINBRPT"/>
</dbReference>
<dbReference type="SMART" id="SM00256">
    <property type="entry name" value="FBOX"/>
    <property type="match status" value="1"/>
</dbReference>
<dbReference type="SMART" id="SM00320">
    <property type="entry name" value="WD40"/>
    <property type="match status" value="7"/>
</dbReference>
<dbReference type="SUPFAM" id="SSF81383">
    <property type="entry name" value="F-box domain"/>
    <property type="match status" value="1"/>
</dbReference>
<dbReference type="SUPFAM" id="SSF50978">
    <property type="entry name" value="WD40 repeat-like"/>
    <property type="match status" value="1"/>
</dbReference>
<dbReference type="PROSITE" id="PS50181">
    <property type="entry name" value="FBOX"/>
    <property type="match status" value="1"/>
</dbReference>
<dbReference type="PROSITE" id="PS00678">
    <property type="entry name" value="WD_REPEATS_1"/>
    <property type="match status" value="3"/>
</dbReference>
<dbReference type="PROSITE" id="PS50082">
    <property type="entry name" value="WD_REPEATS_2"/>
    <property type="match status" value="4"/>
</dbReference>
<dbReference type="PROSITE" id="PS50294">
    <property type="entry name" value="WD_REPEATS_REGION"/>
    <property type="match status" value="1"/>
</dbReference>
<organism>
    <name type="scientific">Schizosaccharomyces pombe (strain 972 / ATCC 24843)</name>
    <name type="common">Fission yeast</name>
    <dbReference type="NCBI Taxonomy" id="284812"/>
    <lineage>
        <taxon>Eukaryota</taxon>
        <taxon>Fungi</taxon>
        <taxon>Dikarya</taxon>
        <taxon>Ascomycota</taxon>
        <taxon>Taphrinomycotina</taxon>
        <taxon>Schizosaccharomycetes</taxon>
        <taxon>Schizosaccharomycetales</taxon>
        <taxon>Schizosaccharomycetaceae</taxon>
        <taxon>Schizosaccharomyces</taxon>
    </lineage>
</organism>
<sequence length="775" mass="87817">MNEKKKDSLSVLDSNEFFGETTMVSPSIDVSSSPRPNVERFSPCSTKKDLLEGNNIMTRIPEELSRVSLQFDSKGSQQSMIFTNNRCLSDKENLENLQNLLYLHCDLNRPHLSCELPSEHREKCLKRRNSSLSSNLHANKRFLFNSQSDGNKKNETFPSTNYSNVFYPNNCDSKEVASETTFSLDAPNNSVNYSYFSPNLLGNDSKTRQSFPPHSSSSSHNSLHEPVIYDFSSENPSIHPSNHLSSQKNAVLKLAQLISSFEKLPESVRQYLLFHLLSRCGKHAVQNIHKILLPIFQKNFLTGFPAEITNLVLTHLDAPSLCAVSQVSHHWYKLVSSNEELWKSLFLKDGFFWDSIDSKIRTMCLEQSLSACAIMKRVYFRHFNLRERWLHAPEKIKRCSFPIHGVRLITKLQFDDDKIIVSTCSPRINIYDTKTGVLIRSLEEHEGDVWTFEYVGDTLVTGSTDRTVRVWDLRTGECKQVFYGHTSTIRCIKIVQGNQSTTDTDDVEKENRPASNDANSMPPYIISSSRDCTIRLWSLPCLDDPPFVNVNENPDQNNDFTSATTNPFYIRTLRGHTDSVREVACLGDLIVSASYDGTLRVWKASTGVCLHVLRGHVGRVYSVTINPSRQQCISAGTDAKIRIWNLESGELLQTLHGHSNLVSQVTFNQNILVSASAPPDTSLRVWDLNTGSCRDILKCPLGHIFFQHDESKVVSGSHSTLQLWDIRSGKLVRDLLTDLDIIWQVAYNENVCVAAVLRNNRFWIEVLEFGSTKSS</sequence>
<feature type="chain" id="PRO_0000051139" description="WD repeat-containing protein pop1">
    <location>
        <begin position="1"/>
        <end position="775"/>
    </location>
</feature>
<feature type="domain" description="F-box" evidence="1">
    <location>
        <begin position="298"/>
        <end position="345"/>
    </location>
</feature>
<feature type="repeat" description="WD 1">
    <location>
        <begin position="444"/>
        <end position="472"/>
    </location>
</feature>
<feature type="repeat" description="WD 2">
    <location>
        <begin position="484"/>
        <end position="538"/>
    </location>
</feature>
<feature type="repeat" description="WD 3">
    <location>
        <begin position="575"/>
        <end position="603"/>
    </location>
</feature>
<feature type="repeat" description="WD 4">
    <location>
        <begin position="615"/>
        <end position="645"/>
    </location>
</feature>
<feature type="repeat" description="WD 5">
    <location>
        <begin position="657"/>
        <end position="687"/>
    </location>
</feature>
<protein>
    <recommendedName>
        <fullName>WD repeat-containing protein pop1</fullName>
    </recommendedName>
    <alternativeName>
        <fullName>WD repeat-containing protein ste16</fullName>
    </alternativeName>
</protein>